<feature type="chain" id="PRO_1000188576" description="Dual-specificity RNA methyltransferase RlmN">
    <location>
        <begin position="1"/>
        <end position="384"/>
    </location>
</feature>
<feature type="domain" description="Radical SAM core" evidence="2">
    <location>
        <begin position="111"/>
        <end position="350"/>
    </location>
</feature>
<feature type="active site" description="Proton acceptor" evidence="1">
    <location>
        <position position="105"/>
    </location>
</feature>
<feature type="active site" description="S-methylcysteine intermediate" evidence="1">
    <location>
        <position position="355"/>
    </location>
</feature>
<feature type="binding site" evidence="1">
    <location>
        <position position="125"/>
    </location>
    <ligand>
        <name>[4Fe-4S] cluster</name>
        <dbReference type="ChEBI" id="CHEBI:49883"/>
        <note>4Fe-4S-S-AdoMet</note>
    </ligand>
</feature>
<feature type="binding site" evidence="1">
    <location>
        <position position="129"/>
    </location>
    <ligand>
        <name>[4Fe-4S] cluster</name>
        <dbReference type="ChEBI" id="CHEBI:49883"/>
        <note>4Fe-4S-S-AdoMet</note>
    </ligand>
</feature>
<feature type="binding site" evidence="1">
    <location>
        <position position="132"/>
    </location>
    <ligand>
        <name>[4Fe-4S] cluster</name>
        <dbReference type="ChEBI" id="CHEBI:49883"/>
        <note>4Fe-4S-S-AdoMet</note>
    </ligand>
</feature>
<feature type="binding site" evidence="1">
    <location>
        <begin position="179"/>
        <end position="180"/>
    </location>
    <ligand>
        <name>S-adenosyl-L-methionine</name>
        <dbReference type="ChEBI" id="CHEBI:59789"/>
    </ligand>
</feature>
<feature type="binding site" evidence="1">
    <location>
        <position position="211"/>
    </location>
    <ligand>
        <name>S-adenosyl-L-methionine</name>
        <dbReference type="ChEBI" id="CHEBI:59789"/>
    </ligand>
</feature>
<feature type="binding site" evidence="1">
    <location>
        <begin position="233"/>
        <end position="235"/>
    </location>
    <ligand>
        <name>S-adenosyl-L-methionine</name>
        <dbReference type="ChEBI" id="CHEBI:59789"/>
    </ligand>
</feature>
<feature type="binding site" evidence="1">
    <location>
        <position position="312"/>
    </location>
    <ligand>
        <name>S-adenosyl-L-methionine</name>
        <dbReference type="ChEBI" id="CHEBI:59789"/>
    </ligand>
</feature>
<feature type="disulfide bond" description="(transient)" evidence="1">
    <location>
        <begin position="118"/>
        <end position="355"/>
    </location>
</feature>
<comment type="function">
    <text evidence="1">Specifically methylates position 2 of adenine 2503 in 23S rRNA and position 2 of adenine 37 in tRNAs. m2A2503 modification seems to play a crucial role in the proofreading step occurring at the peptidyl transferase center and thus would serve to optimize ribosomal fidelity.</text>
</comment>
<comment type="catalytic activity">
    <reaction evidence="1">
        <text>adenosine(2503) in 23S rRNA + 2 reduced [2Fe-2S]-[ferredoxin] + 2 S-adenosyl-L-methionine = 2-methyladenosine(2503) in 23S rRNA + 5'-deoxyadenosine + L-methionine + 2 oxidized [2Fe-2S]-[ferredoxin] + S-adenosyl-L-homocysteine</text>
        <dbReference type="Rhea" id="RHEA:42916"/>
        <dbReference type="Rhea" id="RHEA-COMP:10000"/>
        <dbReference type="Rhea" id="RHEA-COMP:10001"/>
        <dbReference type="Rhea" id="RHEA-COMP:10152"/>
        <dbReference type="Rhea" id="RHEA-COMP:10282"/>
        <dbReference type="ChEBI" id="CHEBI:17319"/>
        <dbReference type="ChEBI" id="CHEBI:33737"/>
        <dbReference type="ChEBI" id="CHEBI:33738"/>
        <dbReference type="ChEBI" id="CHEBI:57844"/>
        <dbReference type="ChEBI" id="CHEBI:57856"/>
        <dbReference type="ChEBI" id="CHEBI:59789"/>
        <dbReference type="ChEBI" id="CHEBI:74411"/>
        <dbReference type="ChEBI" id="CHEBI:74497"/>
        <dbReference type="EC" id="2.1.1.192"/>
    </reaction>
</comment>
<comment type="catalytic activity">
    <reaction evidence="1">
        <text>adenosine(37) in tRNA + 2 reduced [2Fe-2S]-[ferredoxin] + 2 S-adenosyl-L-methionine = 2-methyladenosine(37) in tRNA + 5'-deoxyadenosine + L-methionine + 2 oxidized [2Fe-2S]-[ferredoxin] + S-adenosyl-L-homocysteine</text>
        <dbReference type="Rhea" id="RHEA:43332"/>
        <dbReference type="Rhea" id="RHEA-COMP:10000"/>
        <dbReference type="Rhea" id="RHEA-COMP:10001"/>
        <dbReference type="Rhea" id="RHEA-COMP:10162"/>
        <dbReference type="Rhea" id="RHEA-COMP:10485"/>
        <dbReference type="ChEBI" id="CHEBI:17319"/>
        <dbReference type="ChEBI" id="CHEBI:33737"/>
        <dbReference type="ChEBI" id="CHEBI:33738"/>
        <dbReference type="ChEBI" id="CHEBI:57844"/>
        <dbReference type="ChEBI" id="CHEBI:57856"/>
        <dbReference type="ChEBI" id="CHEBI:59789"/>
        <dbReference type="ChEBI" id="CHEBI:74411"/>
        <dbReference type="ChEBI" id="CHEBI:74497"/>
        <dbReference type="EC" id="2.1.1.192"/>
    </reaction>
</comment>
<comment type="cofactor">
    <cofactor evidence="1">
        <name>[4Fe-4S] cluster</name>
        <dbReference type="ChEBI" id="CHEBI:49883"/>
    </cofactor>
    <text evidence="1">Binds 1 [4Fe-4S] cluster. The cluster is coordinated with 3 cysteines and an exchangeable S-adenosyl-L-methionine.</text>
</comment>
<comment type="subcellular location">
    <subcellularLocation>
        <location evidence="1">Cytoplasm</location>
    </subcellularLocation>
</comment>
<comment type="miscellaneous">
    <text evidence="1">Reaction proceeds by a ping-pong mechanism involving intermediate methylation of a conserved cysteine residue.</text>
</comment>
<comment type="similarity">
    <text evidence="1">Belongs to the radical SAM superfamily. RlmN family.</text>
</comment>
<accession>B6I589</accession>
<evidence type="ECO:0000255" key="1">
    <source>
        <dbReference type="HAMAP-Rule" id="MF_01849"/>
    </source>
</evidence>
<evidence type="ECO:0000255" key="2">
    <source>
        <dbReference type="PROSITE-ProRule" id="PRU01266"/>
    </source>
</evidence>
<gene>
    <name evidence="1" type="primary">rlmN</name>
    <name type="ordered locus">ECSE_2803</name>
</gene>
<name>RLMN_ECOSE</name>
<organism>
    <name type="scientific">Escherichia coli (strain SE11)</name>
    <dbReference type="NCBI Taxonomy" id="409438"/>
    <lineage>
        <taxon>Bacteria</taxon>
        <taxon>Pseudomonadati</taxon>
        <taxon>Pseudomonadota</taxon>
        <taxon>Gammaproteobacteria</taxon>
        <taxon>Enterobacterales</taxon>
        <taxon>Enterobacteriaceae</taxon>
        <taxon>Escherichia</taxon>
    </lineage>
</organism>
<keyword id="KW-0004">4Fe-4S</keyword>
<keyword id="KW-0963">Cytoplasm</keyword>
<keyword id="KW-1015">Disulfide bond</keyword>
<keyword id="KW-0408">Iron</keyword>
<keyword id="KW-0411">Iron-sulfur</keyword>
<keyword id="KW-0479">Metal-binding</keyword>
<keyword id="KW-0489">Methyltransferase</keyword>
<keyword id="KW-0698">rRNA processing</keyword>
<keyword id="KW-0949">S-adenosyl-L-methionine</keyword>
<keyword id="KW-0808">Transferase</keyword>
<keyword id="KW-0819">tRNA processing</keyword>
<proteinExistence type="inferred from homology"/>
<sequence>MSEQLVTPENVTTKDGKINLLDLNRQQMREFFKDLGEKPFRADQVMKWMYHYCCDNFDEMTDINKVLRGKLKEVAEIRAPEVVEEQRSSDGTIKWAIAVGDQRVETVYIPEDDRATLCVSSQVGCALECKFCSTAQQGFNRNLRVSEIIGQVWRAAKIVGAAKVTGQRPITNVVMMGMGEPLLNLNNVVPAMEIMLDDFGFGLSKRRVTLSTSGVVPALDKLGDMIDVALAISLHAPNDEIRDEIVPINKKYNIETFLAAVRRYLEKSNANQGRVTIEYVMLDHVNDGTEHAHQLAELLKDTPCKINLIPWNPFPGAPYGRSSNSRIDRFSKVLMSYGFTTIVRKTRGDDIDAACGQLAGDVIDRTKRTLRKRMQGEAIDIKAV</sequence>
<dbReference type="EC" id="2.1.1.192" evidence="1"/>
<dbReference type="EMBL" id="AP009240">
    <property type="protein sequence ID" value="BAG78327.1"/>
    <property type="molecule type" value="Genomic_DNA"/>
</dbReference>
<dbReference type="RefSeq" id="WP_000003317.1">
    <property type="nucleotide sequence ID" value="NC_011415.1"/>
</dbReference>
<dbReference type="SMR" id="B6I589"/>
<dbReference type="KEGG" id="ecy:ECSE_2803"/>
<dbReference type="HOGENOM" id="CLU_029101_0_0_6"/>
<dbReference type="Proteomes" id="UP000008199">
    <property type="component" value="Chromosome"/>
</dbReference>
<dbReference type="GO" id="GO:0005737">
    <property type="term" value="C:cytoplasm"/>
    <property type="evidence" value="ECO:0007669"/>
    <property type="project" value="UniProtKB-SubCell"/>
</dbReference>
<dbReference type="GO" id="GO:0051539">
    <property type="term" value="F:4 iron, 4 sulfur cluster binding"/>
    <property type="evidence" value="ECO:0007669"/>
    <property type="project" value="UniProtKB-UniRule"/>
</dbReference>
<dbReference type="GO" id="GO:0046872">
    <property type="term" value="F:metal ion binding"/>
    <property type="evidence" value="ECO:0007669"/>
    <property type="project" value="UniProtKB-KW"/>
</dbReference>
<dbReference type="GO" id="GO:0070040">
    <property type="term" value="F:rRNA (adenine(2503)-C2-)-methyltransferase activity"/>
    <property type="evidence" value="ECO:0007669"/>
    <property type="project" value="UniProtKB-UniRule"/>
</dbReference>
<dbReference type="GO" id="GO:0019843">
    <property type="term" value="F:rRNA binding"/>
    <property type="evidence" value="ECO:0007669"/>
    <property type="project" value="UniProtKB-UniRule"/>
</dbReference>
<dbReference type="GO" id="GO:0002935">
    <property type="term" value="F:tRNA (adenine(37)-C2)-methyltransferase activity"/>
    <property type="evidence" value="ECO:0007669"/>
    <property type="project" value="UniProtKB-UniRule"/>
</dbReference>
<dbReference type="GO" id="GO:0000049">
    <property type="term" value="F:tRNA binding"/>
    <property type="evidence" value="ECO:0007669"/>
    <property type="project" value="UniProtKB-UniRule"/>
</dbReference>
<dbReference type="GO" id="GO:0070475">
    <property type="term" value="P:rRNA base methylation"/>
    <property type="evidence" value="ECO:0007669"/>
    <property type="project" value="UniProtKB-UniRule"/>
</dbReference>
<dbReference type="GO" id="GO:0030488">
    <property type="term" value="P:tRNA methylation"/>
    <property type="evidence" value="ECO:0007669"/>
    <property type="project" value="UniProtKB-UniRule"/>
</dbReference>
<dbReference type="CDD" id="cd01335">
    <property type="entry name" value="Radical_SAM"/>
    <property type="match status" value="1"/>
</dbReference>
<dbReference type="FunFam" id="1.10.150.530:FF:000001">
    <property type="entry name" value="Dual-specificity RNA methyltransferase RlmN"/>
    <property type="match status" value="1"/>
</dbReference>
<dbReference type="FunFam" id="3.20.20.70:FF:000008">
    <property type="entry name" value="Dual-specificity RNA methyltransferase RlmN"/>
    <property type="match status" value="1"/>
</dbReference>
<dbReference type="Gene3D" id="1.10.150.530">
    <property type="match status" value="1"/>
</dbReference>
<dbReference type="Gene3D" id="3.20.20.70">
    <property type="entry name" value="Aldolase class I"/>
    <property type="match status" value="1"/>
</dbReference>
<dbReference type="HAMAP" id="MF_01849">
    <property type="entry name" value="RNA_methyltr_RlmN"/>
    <property type="match status" value="1"/>
</dbReference>
<dbReference type="InterPro" id="IPR013785">
    <property type="entry name" value="Aldolase_TIM"/>
</dbReference>
<dbReference type="InterPro" id="IPR040072">
    <property type="entry name" value="Methyltransferase_A"/>
</dbReference>
<dbReference type="InterPro" id="IPR048641">
    <property type="entry name" value="RlmN_N"/>
</dbReference>
<dbReference type="InterPro" id="IPR027492">
    <property type="entry name" value="RNA_MTrfase_RlmN"/>
</dbReference>
<dbReference type="InterPro" id="IPR004383">
    <property type="entry name" value="rRNA_lsu_MTrfase_RlmN/Cfr"/>
</dbReference>
<dbReference type="InterPro" id="IPR007197">
    <property type="entry name" value="rSAM"/>
</dbReference>
<dbReference type="NCBIfam" id="NF008396">
    <property type="entry name" value="PRK11194.1"/>
    <property type="match status" value="1"/>
</dbReference>
<dbReference type="NCBIfam" id="TIGR00048">
    <property type="entry name" value="rRNA_mod_RlmN"/>
    <property type="match status" value="1"/>
</dbReference>
<dbReference type="PANTHER" id="PTHR30544">
    <property type="entry name" value="23S RRNA METHYLTRANSFERASE"/>
    <property type="match status" value="1"/>
</dbReference>
<dbReference type="PANTHER" id="PTHR30544:SF5">
    <property type="entry name" value="RADICAL SAM CORE DOMAIN-CONTAINING PROTEIN"/>
    <property type="match status" value="1"/>
</dbReference>
<dbReference type="Pfam" id="PF04055">
    <property type="entry name" value="Radical_SAM"/>
    <property type="match status" value="1"/>
</dbReference>
<dbReference type="Pfam" id="PF21016">
    <property type="entry name" value="RlmN_N"/>
    <property type="match status" value="1"/>
</dbReference>
<dbReference type="PIRSF" id="PIRSF006004">
    <property type="entry name" value="CHP00048"/>
    <property type="match status" value="1"/>
</dbReference>
<dbReference type="SFLD" id="SFLDF00275">
    <property type="entry name" value="adenosine_C2_methyltransferase"/>
    <property type="match status" value="1"/>
</dbReference>
<dbReference type="SFLD" id="SFLDG01062">
    <property type="entry name" value="methyltransferase_(Class_A)"/>
    <property type="match status" value="1"/>
</dbReference>
<dbReference type="SUPFAM" id="SSF102114">
    <property type="entry name" value="Radical SAM enzymes"/>
    <property type="match status" value="1"/>
</dbReference>
<dbReference type="PROSITE" id="PS51918">
    <property type="entry name" value="RADICAL_SAM"/>
    <property type="match status" value="1"/>
</dbReference>
<protein>
    <recommendedName>
        <fullName evidence="1">Dual-specificity RNA methyltransferase RlmN</fullName>
        <ecNumber evidence="1">2.1.1.192</ecNumber>
    </recommendedName>
    <alternativeName>
        <fullName evidence="1">23S rRNA (adenine(2503)-C(2))-methyltransferase</fullName>
    </alternativeName>
    <alternativeName>
        <fullName evidence="1">23S rRNA m2A2503 methyltransferase</fullName>
    </alternativeName>
    <alternativeName>
        <fullName evidence="1">Ribosomal RNA large subunit methyltransferase N</fullName>
    </alternativeName>
    <alternativeName>
        <fullName evidence="1">tRNA (adenine(37)-C(2))-methyltransferase</fullName>
    </alternativeName>
    <alternativeName>
        <fullName evidence="1">tRNA m2A37 methyltransferase</fullName>
    </alternativeName>
</protein>
<reference key="1">
    <citation type="journal article" date="2008" name="DNA Res.">
        <title>Complete genome sequence and comparative analysis of the wild-type commensal Escherichia coli strain SE11 isolated from a healthy adult.</title>
        <authorList>
            <person name="Oshima K."/>
            <person name="Toh H."/>
            <person name="Ogura Y."/>
            <person name="Sasamoto H."/>
            <person name="Morita H."/>
            <person name="Park S.-H."/>
            <person name="Ooka T."/>
            <person name="Iyoda S."/>
            <person name="Taylor T.D."/>
            <person name="Hayashi T."/>
            <person name="Itoh K."/>
            <person name="Hattori M."/>
        </authorList>
    </citation>
    <scope>NUCLEOTIDE SEQUENCE [LARGE SCALE GENOMIC DNA]</scope>
    <source>
        <strain>SE11</strain>
    </source>
</reference>